<comment type="function">
    <text evidence="1">Part of the ABC transporter complex PstSACB involved in phosphate import. Responsible for energy coupling to the transport system.</text>
</comment>
<comment type="catalytic activity">
    <reaction evidence="1">
        <text>phosphate(out) + ATP + H2O = ADP + 2 phosphate(in) + H(+)</text>
        <dbReference type="Rhea" id="RHEA:24440"/>
        <dbReference type="ChEBI" id="CHEBI:15377"/>
        <dbReference type="ChEBI" id="CHEBI:15378"/>
        <dbReference type="ChEBI" id="CHEBI:30616"/>
        <dbReference type="ChEBI" id="CHEBI:43474"/>
        <dbReference type="ChEBI" id="CHEBI:456216"/>
        <dbReference type="EC" id="7.3.2.1"/>
    </reaction>
</comment>
<comment type="subunit">
    <text evidence="1">The complex is composed of two ATP-binding proteins (PstB), two transmembrane proteins (PstC and PstA) and a solute-binding protein (PstS).</text>
</comment>
<comment type="subcellular location">
    <subcellularLocation>
        <location evidence="1">Cell membrane</location>
        <topology evidence="1">Peripheral membrane protein</topology>
    </subcellularLocation>
</comment>
<comment type="similarity">
    <text evidence="1">Belongs to the ABC transporter superfamily. Phosphate importer (TC 3.A.1.7) family.</text>
</comment>
<keyword id="KW-0067">ATP-binding</keyword>
<keyword id="KW-1003">Cell membrane</keyword>
<keyword id="KW-0472">Membrane</keyword>
<keyword id="KW-0547">Nucleotide-binding</keyword>
<keyword id="KW-0592">Phosphate transport</keyword>
<keyword id="KW-1185">Reference proteome</keyword>
<keyword id="KW-1278">Translocase</keyword>
<keyword id="KW-0813">Transport</keyword>
<organism>
    <name type="scientific">Streptococcus agalactiae serotype V (strain ATCC BAA-611 / 2603 V/R)</name>
    <dbReference type="NCBI Taxonomy" id="208435"/>
    <lineage>
        <taxon>Bacteria</taxon>
        <taxon>Bacillati</taxon>
        <taxon>Bacillota</taxon>
        <taxon>Bacilli</taxon>
        <taxon>Lactobacillales</taxon>
        <taxon>Streptococcaceae</taxon>
        <taxon>Streptococcus</taxon>
    </lineage>
</organism>
<sequence length="267" mass="30447">MAEYNWDERHIITFPEENSALTTKDLHVYYGEKEAIKGIDMQFEKNKITALIGPSGCGKSTYLRSLNRMNDTIDIARVTGQIMYEGIDVNAQDINVYEMRKHIGMVFQRPNPFAKSIYKNITFAYERAGVKDKKFLDEVVETSLKQAALWDQVKDDLHKSAFTLSGGQQQRLCIARAIAVKPEILLMDEPASALDPIATMQLEETMFELKKNYTIIIVTHNMQQAARASDYTAFFYLGDLIEYDKTNNIFQNAKCQSTSDYVSGRFG</sequence>
<reference key="1">
    <citation type="journal article" date="2002" name="Proc. Natl. Acad. Sci. U.S.A.">
        <title>Complete genome sequence and comparative genomic analysis of an emerging human pathogen, serotype V Streptococcus agalactiae.</title>
        <authorList>
            <person name="Tettelin H."/>
            <person name="Masignani V."/>
            <person name="Cieslewicz M.J."/>
            <person name="Eisen J.A."/>
            <person name="Peterson S.N."/>
            <person name="Wessels M.R."/>
            <person name="Paulsen I.T."/>
            <person name="Nelson K.E."/>
            <person name="Margarit I."/>
            <person name="Read T.D."/>
            <person name="Madoff L.C."/>
            <person name="Wolf A.M."/>
            <person name="Beanan M.J."/>
            <person name="Brinkac L.M."/>
            <person name="Daugherty S.C."/>
            <person name="DeBoy R.T."/>
            <person name="Durkin A.S."/>
            <person name="Kolonay J.F."/>
            <person name="Madupu R."/>
            <person name="Lewis M.R."/>
            <person name="Radune D."/>
            <person name="Fedorova N.B."/>
            <person name="Scanlan D."/>
            <person name="Khouri H.M."/>
            <person name="Mulligan S."/>
            <person name="Carty H.A."/>
            <person name="Cline R.T."/>
            <person name="Van Aken S.E."/>
            <person name="Gill J."/>
            <person name="Scarselli M."/>
            <person name="Mora M."/>
            <person name="Iacobini E.T."/>
            <person name="Brettoni C."/>
            <person name="Galli G."/>
            <person name="Mariani M."/>
            <person name="Vegni F."/>
            <person name="Maione D."/>
            <person name="Rinaudo D."/>
            <person name="Rappuoli R."/>
            <person name="Telford J.L."/>
            <person name="Kasper D.L."/>
            <person name="Grandi G."/>
            <person name="Fraser C.M."/>
        </authorList>
    </citation>
    <scope>NUCLEOTIDE SEQUENCE [LARGE SCALE GENOMIC DNA]</scope>
    <source>
        <strain>ATCC BAA-611 / 2603 V/R</strain>
    </source>
</reference>
<name>PSTB2_STRA5</name>
<gene>
    <name evidence="1" type="primary">pstB2</name>
    <name type="ordered locus">SAG0989</name>
</gene>
<protein>
    <recommendedName>
        <fullName evidence="1">Phosphate import ATP-binding protein PstB 2</fullName>
        <ecNumber evidence="1">7.3.2.1</ecNumber>
    </recommendedName>
    <alternativeName>
        <fullName evidence="1">ABC phosphate transporter 2</fullName>
    </alternativeName>
    <alternativeName>
        <fullName evidence="1">Phosphate-transporting ATPase 2</fullName>
    </alternativeName>
</protein>
<accession>P63370</accession>
<accession>Q8DZV7</accession>
<accession>Q8E5K5</accession>
<feature type="chain" id="PRO_0000092889" description="Phosphate import ATP-binding protein PstB 2">
    <location>
        <begin position="1"/>
        <end position="267"/>
    </location>
</feature>
<feature type="domain" description="ABC transporter" evidence="1">
    <location>
        <begin position="21"/>
        <end position="262"/>
    </location>
</feature>
<feature type="binding site" evidence="1">
    <location>
        <begin position="53"/>
        <end position="60"/>
    </location>
    <ligand>
        <name>ATP</name>
        <dbReference type="ChEBI" id="CHEBI:30616"/>
    </ligand>
</feature>
<proteinExistence type="inferred from homology"/>
<evidence type="ECO:0000255" key="1">
    <source>
        <dbReference type="HAMAP-Rule" id="MF_01702"/>
    </source>
</evidence>
<dbReference type="EC" id="7.3.2.1" evidence="1"/>
<dbReference type="EMBL" id="AE009948">
    <property type="protein sequence ID" value="AAM99872.1"/>
    <property type="molecule type" value="Genomic_DNA"/>
</dbReference>
<dbReference type="RefSeq" id="NP_688000.1">
    <property type="nucleotide sequence ID" value="NC_004116.1"/>
</dbReference>
<dbReference type="SMR" id="P63370"/>
<dbReference type="STRING" id="208435.SAG0989"/>
<dbReference type="KEGG" id="sag:SAG0989"/>
<dbReference type="PATRIC" id="fig|208435.3.peg.996"/>
<dbReference type="HOGENOM" id="CLU_000604_1_22_9"/>
<dbReference type="OrthoDB" id="9802185at2"/>
<dbReference type="Proteomes" id="UP000000821">
    <property type="component" value="Chromosome"/>
</dbReference>
<dbReference type="GO" id="GO:0005886">
    <property type="term" value="C:plasma membrane"/>
    <property type="evidence" value="ECO:0007669"/>
    <property type="project" value="UniProtKB-SubCell"/>
</dbReference>
<dbReference type="GO" id="GO:0005524">
    <property type="term" value="F:ATP binding"/>
    <property type="evidence" value="ECO:0007669"/>
    <property type="project" value="UniProtKB-KW"/>
</dbReference>
<dbReference type="GO" id="GO:0016887">
    <property type="term" value="F:ATP hydrolysis activity"/>
    <property type="evidence" value="ECO:0007669"/>
    <property type="project" value="InterPro"/>
</dbReference>
<dbReference type="GO" id="GO:0015415">
    <property type="term" value="F:ATPase-coupled phosphate ion transmembrane transporter activity"/>
    <property type="evidence" value="ECO:0007669"/>
    <property type="project" value="UniProtKB-EC"/>
</dbReference>
<dbReference type="GO" id="GO:0035435">
    <property type="term" value="P:phosphate ion transmembrane transport"/>
    <property type="evidence" value="ECO:0007669"/>
    <property type="project" value="InterPro"/>
</dbReference>
<dbReference type="CDD" id="cd03260">
    <property type="entry name" value="ABC_PstB_phosphate_transporter"/>
    <property type="match status" value="1"/>
</dbReference>
<dbReference type="Gene3D" id="3.40.50.300">
    <property type="entry name" value="P-loop containing nucleotide triphosphate hydrolases"/>
    <property type="match status" value="1"/>
</dbReference>
<dbReference type="InterPro" id="IPR003593">
    <property type="entry name" value="AAA+_ATPase"/>
</dbReference>
<dbReference type="InterPro" id="IPR003439">
    <property type="entry name" value="ABC_transporter-like_ATP-bd"/>
</dbReference>
<dbReference type="InterPro" id="IPR017871">
    <property type="entry name" value="ABC_transporter-like_CS"/>
</dbReference>
<dbReference type="InterPro" id="IPR027417">
    <property type="entry name" value="P-loop_NTPase"/>
</dbReference>
<dbReference type="InterPro" id="IPR005670">
    <property type="entry name" value="PstB-like"/>
</dbReference>
<dbReference type="NCBIfam" id="TIGR00972">
    <property type="entry name" value="3a0107s01c2"/>
    <property type="match status" value="1"/>
</dbReference>
<dbReference type="PANTHER" id="PTHR43423">
    <property type="entry name" value="ABC TRANSPORTER I FAMILY MEMBER 17"/>
    <property type="match status" value="1"/>
</dbReference>
<dbReference type="PANTHER" id="PTHR43423:SF10">
    <property type="entry name" value="PHOSPHATE IMPORT ATP-BINDING PROTEIN PSTB 2"/>
    <property type="match status" value="1"/>
</dbReference>
<dbReference type="Pfam" id="PF00005">
    <property type="entry name" value="ABC_tran"/>
    <property type="match status" value="1"/>
</dbReference>
<dbReference type="SMART" id="SM00382">
    <property type="entry name" value="AAA"/>
    <property type="match status" value="1"/>
</dbReference>
<dbReference type="SUPFAM" id="SSF52540">
    <property type="entry name" value="P-loop containing nucleoside triphosphate hydrolases"/>
    <property type="match status" value="1"/>
</dbReference>
<dbReference type="PROSITE" id="PS00211">
    <property type="entry name" value="ABC_TRANSPORTER_1"/>
    <property type="match status" value="1"/>
</dbReference>
<dbReference type="PROSITE" id="PS50893">
    <property type="entry name" value="ABC_TRANSPORTER_2"/>
    <property type="match status" value="1"/>
</dbReference>
<dbReference type="PROSITE" id="PS51238">
    <property type="entry name" value="PSTB"/>
    <property type="match status" value="1"/>
</dbReference>